<gene>
    <name evidence="5" type="primary">AGL66</name>
    <name evidence="7" type="ordered locus">At1g77980</name>
</gene>
<evidence type="ECO:0000255" key="1"/>
<evidence type="ECO:0000255" key="2">
    <source>
        <dbReference type="PROSITE-ProRule" id="PRU00251"/>
    </source>
</evidence>
<evidence type="ECO:0000269" key="3">
    <source>
    </source>
</evidence>
<evidence type="ECO:0000269" key="4">
    <source>
    </source>
</evidence>
<evidence type="ECO:0000303" key="5">
    <source>
    </source>
</evidence>
<evidence type="ECO:0000305" key="6"/>
<evidence type="ECO:0000312" key="7">
    <source>
        <dbReference type="Araport" id="AT1G77980"/>
    </source>
</evidence>
<accession>Q1PFC2</accession>
<accession>A0MEH0</accession>
<accession>Q76K85</accession>
<accession>Q7X9H4</accession>
<reference key="1">
    <citation type="journal article" date="2003" name="Plant Cell">
        <title>Molecular and phylogenetic analyses of the complete MADS-box transcription factor family in Arabidopsis: new openings to the MADS world.</title>
        <authorList>
            <person name="Parenicova L."/>
            <person name="de Folter S."/>
            <person name="Kieffer M."/>
            <person name="Horner D.S."/>
            <person name="Favalli C."/>
            <person name="Busscher J."/>
            <person name="Cook H.E."/>
            <person name="Ingram R.M."/>
            <person name="Kater M.M."/>
            <person name="Davies B."/>
            <person name="Angenent G.C."/>
            <person name="Colombo L."/>
        </authorList>
    </citation>
    <scope>NUCLEOTIDE SEQUENCE [MRNA]</scope>
    <scope>GENE FAMILY</scope>
    <scope>NOMENCLATURE</scope>
    <source>
        <strain>cv. Columbia</strain>
        <tissue>Flower</tissue>
    </source>
</reference>
<reference key="2">
    <citation type="journal article" date="2000" name="Nature">
        <title>Sequence and analysis of chromosome 1 of the plant Arabidopsis thaliana.</title>
        <authorList>
            <person name="Theologis A."/>
            <person name="Ecker J.R."/>
            <person name="Palm C.J."/>
            <person name="Federspiel N.A."/>
            <person name="Kaul S."/>
            <person name="White O."/>
            <person name="Alonso J."/>
            <person name="Altafi H."/>
            <person name="Araujo R."/>
            <person name="Bowman C.L."/>
            <person name="Brooks S.Y."/>
            <person name="Buehler E."/>
            <person name="Chan A."/>
            <person name="Chao Q."/>
            <person name="Chen H."/>
            <person name="Cheuk R.F."/>
            <person name="Chin C.W."/>
            <person name="Chung M.K."/>
            <person name="Conn L."/>
            <person name="Conway A.B."/>
            <person name="Conway A.R."/>
            <person name="Creasy T.H."/>
            <person name="Dewar K."/>
            <person name="Dunn P."/>
            <person name="Etgu P."/>
            <person name="Feldblyum T.V."/>
            <person name="Feng J.-D."/>
            <person name="Fong B."/>
            <person name="Fujii C.Y."/>
            <person name="Gill J.E."/>
            <person name="Goldsmith A.D."/>
            <person name="Haas B."/>
            <person name="Hansen N.F."/>
            <person name="Hughes B."/>
            <person name="Huizar L."/>
            <person name="Hunter J.L."/>
            <person name="Jenkins J."/>
            <person name="Johnson-Hopson C."/>
            <person name="Khan S."/>
            <person name="Khaykin E."/>
            <person name="Kim C.J."/>
            <person name="Koo H.L."/>
            <person name="Kremenetskaia I."/>
            <person name="Kurtz D.B."/>
            <person name="Kwan A."/>
            <person name="Lam B."/>
            <person name="Langin-Hooper S."/>
            <person name="Lee A."/>
            <person name="Lee J.M."/>
            <person name="Lenz C.A."/>
            <person name="Li J.H."/>
            <person name="Li Y.-P."/>
            <person name="Lin X."/>
            <person name="Liu S.X."/>
            <person name="Liu Z.A."/>
            <person name="Luros J.S."/>
            <person name="Maiti R."/>
            <person name="Marziali A."/>
            <person name="Militscher J."/>
            <person name="Miranda M."/>
            <person name="Nguyen M."/>
            <person name="Nierman W.C."/>
            <person name="Osborne B.I."/>
            <person name="Pai G."/>
            <person name="Peterson J."/>
            <person name="Pham P.K."/>
            <person name="Rizzo M."/>
            <person name="Rooney T."/>
            <person name="Rowley D."/>
            <person name="Sakano H."/>
            <person name="Salzberg S.L."/>
            <person name="Schwartz J.R."/>
            <person name="Shinn P."/>
            <person name="Southwick A.M."/>
            <person name="Sun H."/>
            <person name="Tallon L.J."/>
            <person name="Tambunga G."/>
            <person name="Toriumi M.J."/>
            <person name="Town C.D."/>
            <person name="Utterback T."/>
            <person name="Van Aken S."/>
            <person name="Vaysberg M."/>
            <person name="Vysotskaia V.S."/>
            <person name="Walker M."/>
            <person name="Wu D."/>
            <person name="Yu G."/>
            <person name="Fraser C.M."/>
            <person name="Venter J.C."/>
            <person name="Davis R.W."/>
        </authorList>
    </citation>
    <scope>NUCLEOTIDE SEQUENCE [LARGE SCALE GENOMIC DNA]</scope>
    <source>
        <strain>cv. Columbia</strain>
    </source>
</reference>
<reference key="3">
    <citation type="journal article" date="2017" name="Plant J.">
        <title>Araport11: a complete reannotation of the Arabidopsis thaliana reference genome.</title>
        <authorList>
            <person name="Cheng C.Y."/>
            <person name="Krishnakumar V."/>
            <person name="Chan A.P."/>
            <person name="Thibaud-Nissen F."/>
            <person name="Schobel S."/>
            <person name="Town C.D."/>
        </authorList>
    </citation>
    <scope>GENOME REANNOTATION</scope>
    <source>
        <strain>cv. Columbia</strain>
    </source>
</reference>
<reference key="4">
    <citation type="journal article" date="2006" name="Plant Biotechnol. J.">
        <title>Simultaneous high-throughput recombinational cloning of open reading frames in closed and open configurations.</title>
        <authorList>
            <person name="Underwood B.A."/>
            <person name="Vanderhaeghen R."/>
            <person name="Whitford R."/>
            <person name="Town C.D."/>
            <person name="Hilson P."/>
        </authorList>
    </citation>
    <scope>NUCLEOTIDE SEQUENCE [LARGE SCALE MRNA]</scope>
    <source>
        <strain>cv. Columbia</strain>
    </source>
</reference>
<reference key="5">
    <citation type="journal article" date="2003" name="Mol. Biol. Evol.">
        <title>Evolution and divergence of the MADS-box gene family based on genome-wide expression analyses.</title>
        <authorList>
            <person name="Kofuji R."/>
            <person name="Sumikawa N."/>
            <person name="Yamasaki M."/>
            <person name="Kondo K."/>
            <person name="Ueda K."/>
            <person name="Ito M."/>
            <person name="Hasebe M."/>
        </authorList>
    </citation>
    <scope>NUCLEOTIDE SEQUENCE [MRNA] OF 26-332</scope>
    <scope>TISSUE SPECIFICITY</scope>
    <source>
        <strain>cv. Columbia</strain>
    </source>
</reference>
<reference key="6">
    <citation type="journal article" date="2009" name="Plant Physiol.">
        <title>MIKC* MADS domain heterodimers are required for pollen maturation and tube growth in Arabidopsis.</title>
        <authorList>
            <person name="Adamczyk B.J."/>
            <person name="Fernandez D.E."/>
        </authorList>
    </citation>
    <scope>FUNCTION</scope>
    <scope>INTERACTION WITH AGL30</scope>
    <scope>DISRUPTION PHENOTYPE</scope>
</reference>
<organism>
    <name type="scientific">Arabidopsis thaliana</name>
    <name type="common">Mouse-ear cress</name>
    <dbReference type="NCBI Taxonomy" id="3702"/>
    <lineage>
        <taxon>Eukaryota</taxon>
        <taxon>Viridiplantae</taxon>
        <taxon>Streptophyta</taxon>
        <taxon>Embryophyta</taxon>
        <taxon>Tracheophyta</taxon>
        <taxon>Spermatophyta</taxon>
        <taxon>Magnoliopsida</taxon>
        <taxon>eudicotyledons</taxon>
        <taxon>Gunneridae</taxon>
        <taxon>Pentapetalae</taxon>
        <taxon>rosids</taxon>
        <taxon>malvids</taxon>
        <taxon>Brassicales</taxon>
        <taxon>Brassicaceae</taxon>
        <taxon>Camelineae</taxon>
        <taxon>Arabidopsis</taxon>
    </lineage>
</organism>
<dbReference type="EMBL" id="AY141242">
    <property type="protein sequence ID" value="AAN52806.1"/>
    <property type="molecule type" value="mRNA"/>
</dbReference>
<dbReference type="EMBL" id="AC009243">
    <property type="status" value="NOT_ANNOTATED_CDS"/>
    <property type="molecule type" value="Genomic_DNA"/>
</dbReference>
<dbReference type="EMBL" id="CP002684">
    <property type="protein sequence ID" value="AEE36053.1"/>
    <property type="molecule type" value="Genomic_DNA"/>
</dbReference>
<dbReference type="EMBL" id="DQ446441">
    <property type="protein sequence ID" value="ABE65783.1"/>
    <property type="molecule type" value="mRNA"/>
</dbReference>
<dbReference type="EMBL" id="DQ652940">
    <property type="protein sequence ID" value="ABK28473.1"/>
    <property type="status" value="ALT_SEQ"/>
    <property type="molecule type" value="mRNA"/>
</dbReference>
<dbReference type="EMBL" id="AB094111">
    <property type="protein sequence ID" value="BAC99086.1"/>
    <property type="molecule type" value="mRNA"/>
</dbReference>
<dbReference type="RefSeq" id="NP_177921.2">
    <property type="nucleotide sequence ID" value="NM_106447.4"/>
</dbReference>
<dbReference type="SMR" id="Q1PFC2"/>
<dbReference type="FunCoup" id="Q1PFC2">
    <property type="interactions" value="82"/>
</dbReference>
<dbReference type="IntAct" id="Q1PFC2">
    <property type="interactions" value="7"/>
</dbReference>
<dbReference type="STRING" id="3702.Q1PFC2"/>
<dbReference type="PaxDb" id="3702-AT1G77980.1"/>
<dbReference type="ProteomicsDB" id="244943"/>
<dbReference type="EnsemblPlants" id="AT1G77980.1">
    <property type="protein sequence ID" value="AT1G77980.1"/>
    <property type="gene ID" value="AT1G77980"/>
</dbReference>
<dbReference type="GeneID" id="844133"/>
<dbReference type="Gramene" id="AT1G77980.1">
    <property type="protein sequence ID" value="AT1G77980.1"/>
    <property type="gene ID" value="AT1G77980"/>
</dbReference>
<dbReference type="KEGG" id="ath:AT1G77980"/>
<dbReference type="Araport" id="AT1G77980"/>
<dbReference type="TAIR" id="AT1G77980">
    <property type="gene designation" value="AGL66"/>
</dbReference>
<dbReference type="eggNOG" id="KOG0014">
    <property type="taxonomic scope" value="Eukaryota"/>
</dbReference>
<dbReference type="HOGENOM" id="CLU_048196_1_1_1"/>
<dbReference type="InParanoid" id="Q1PFC2"/>
<dbReference type="OMA" id="HSAMYET"/>
<dbReference type="PhylomeDB" id="Q1PFC2"/>
<dbReference type="PRO" id="PR:Q1PFC2"/>
<dbReference type="Proteomes" id="UP000006548">
    <property type="component" value="Chromosome 1"/>
</dbReference>
<dbReference type="ExpressionAtlas" id="Q1PFC2">
    <property type="expression patterns" value="baseline and differential"/>
</dbReference>
<dbReference type="GO" id="GO:0005634">
    <property type="term" value="C:nucleus"/>
    <property type="evidence" value="ECO:0007669"/>
    <property type="project" value="UniProtKB-SubCell"/>
</dbReference>
<dbReference type="GO" id="GO:0003700">
    <property type="term" value="F:DNA-binding transcription factor activity"/>
    <property type="evidence" value="ECO:0000250"/>
    <property type="project" value="TAIR"/>
</dbReference>
<dbReference type="GO" id="GO:0046983">
    <property type="term" value="F:protein dimerization activity"/>
    <property type="evidence" value="ECO:0007669"/>
    <property type="project" value="InterPro"/>
</dbReference>
<dbReference type="GO" id="GO:0000977">
    <property type="term" value="F:RNA polymerase II transcription regulatory region sequence-specific DNA binding"/>
    <property type="evidence" value="ECO:0007669"/>
    <property type="project" value="InterPro"/>
</dbReference>
<dbReference type="GO" id="GO:0009555">
    <property type="term" value="P:pollen development"/>
    <property type="evidence" value="ECO:0000315"/>
    <property type="project" value="TAIR"/>
</dbReference>
<dbReference type="GO" id="GO:0010152">
    <property type="term" value="P:pollen maturation"/>
    <property type="evidence" value="ECO:0000315"/>
    <property type="project" value="UniProtKB"/>
</dbReference>
<dbReference type="GO" id="GO:0045944">
    <property type="term" value="P:positive regulation of transcription by RNA polymerase II"/>
    <property type="evidence" value="ECO:0007669"/>
    <property type="project" value="InterPro"/>
</dbReference>
<dbReference type="GO" id="GO:0006355">
    <property type="term" value="P:regulation of DNA-templated transcription"/>
    <property type="evidence" value="ECO:0000304"/>
    <property type="project" value="TAIR"/>
</dbReference>
<dbReference type="GO" id="GO:0080092">
    <property type="term" value="P:regulation of pollen tube growth"/>
    <property type="evidence" value="ECO:0000315"/>
    <property type="project" value="UniProtKB"/>
</dbReference>
<dbReference type="CDD" id="cd00265">
    <property type="entry name" value="MADS_MEF2_like"/>
    <property type="match status" value="1"/>
</dbReference>
<dbReference type="FunFam" id="3.40.1810.10:FF:000014">
    <property type="entry name" value="MADS-box transcription factor 41"/>
    <property type="match status" value="1"/>
</dbReference>
<dbReference type="Gene3D" id="3.40.1810.10">
    <property type="entry name" value="Transcription factor, MADS-box"/>
    <property type="match status" value="1"/>
</dbReference>
<dbReference type="InterPro" id="IPR050142">
    <property type="entry name" value="MADS-box/MEF2_TF"/>
</dbReference>
<dbReference type="InterPro" id="IPR033896">
    <property type="entry name" value="MEF2-like_N"/>
</dbReference>
<dbReference type="InterPro" id="IPR002100">
    <property type="entry name" value="TF_MADSbox"/>
</dbReference>
<dbReference type="InterPro" id="IPR036879">
    <property type="entry name" value="TF_MADSbox_sf"/>
</dbReference>
<dbReference type="PANTHER" id="PTHR48019">
    <property type="entry name" value="SERUM RESPONSE FACTOR HOMOLOG"/>
    <property type="match status" value="1"/>
</dbReference>
<dbReference type="Pfam" id="PF00319">
    <property type="entry name" value="SRF-TF"/>
    <property type="match status" value="1"/>
</dbReference>
<dbReference type="PRINTS" id="PR00404">
    <property type="entry name" value="MADSDOMAIN"/>
</dbReference>
<dbReference type="SMART" id="SM00432">
    <property type="entry name" value="MADS"/>
    <property type="match status" value="1"/>
</dbReference>
<dbReference type="SUPFAM" id="SSF55455">
    <property type="entry name" value="SRF-like"/>
    <property type="match status" value="1"/>
</dbReference>
<dbReference type="PROSITE" id="PS00350">
    <property type="entry name" value="MADS_BOX_1"/>
    <property type="match status" value="1"/>
</dbReference>
<dbReference type="PROSITE" id="PS50066">
    <property type="entry name" value="MADS_BOX_2"/>
    <property type="match status" value="1"/>
</dbReference>
<feature type="chain" id="PRO_0000433968" description="Agamous-like MADS-box protein AGL66">
    <location>
        <begin position="1"/>
        <end position="332"/>
    </location>
</feature>
<feature type="domain" description="MADS-box" evidence="2">
    <location>
        <begin position="1"/>
        <end position="61"/>
    </location>
</feature>
<feature type="coiled-coil region" evidence="1">
    <location>
        <begin position="120"/>
        <end position="151"/>
    </location>
</feature>
<feature type="sequence conflict" description="In Ref. 1; AAN52806." evidence="6" ref="1">
    <original>K</original>
    <variation>E</variation>
    <location>
        <position position="60"/>
    </location>
</feature>
<name>AGL66_ARATH</name>
<keyword id="KW-0175">Coiled coil</keyword>
<keyword id="KW-0238">DNA-binding</keyword>
<keyword id="KW-0539">Nucleus</keyword>
<keyword id="KW-1185">Reference proteome</keyword>
<keyword id="KW-0804">Transcription</keyword>
<keyword id="KW-0805">Transcription regulation</keyword>
<protein>
    <recommendedName>
        <fullName evidence="6">Agamous-like MADS-box protein AGL66</fullName>
    </recommendedName>
</protein>
<comment type="function">
    <text evidence="4">Probable transcription factor that forms a heterodimer with the MADS-box protein AGL30 and is involved in the regulation of pollen maturation at the late stages of pollen development and pollen tube growth.</text>
</comment>
<comment type="subunit">
    <text evidence="4">Forms a heterodimer with AGL30.</text>
</comment>
<comment type="subcellular location">
    <subcellularLocation>
        <location evidence="2">Nucleus</location>
    </subcellularLocation>
</comment>
<comment type="tissue specificity">
    <text evidence="3">Expressed in pollen.</text>
</comment>
<comment type="disruption phenotype">
    <text evidence="4">No visible phenotype under normal growth conditions. Pollen grains from the double mutant agl66 and agl104 have severely reduced viability, delayed germination and aberrant pollen tube growth.</text>
</comment>
<comment type="sequence caution" evidence="6">
    <conflict type="erroneous termination">
        <sequence resource="EMBL-CDS" id="ABK28473"/>
    </conflict>
    <text>Extended C-terminus.</text>
</comment>
<sequence>MGRVKLEIKRIENTTNRQVTFSKRRNGLIKKAYELSILCDIDIALLMFSPSDRLSLFSGKTRIEDVFSRYINLSDQERENALVFPDQSRRPDFQSKEYLLRTLQQLKAENDIALQLTNPTAINSDVEELEHEVYKLQQQLLMAEEELRKYEPDPIRFTTMEEYETCEKQLMDTLTRVNQRREHILSQDQLSSYEASALQQQQSMGGPFGNDVVGGWLTENGPNEAHLFDASAHSAMYETLLQGSSSSSNQNNIMGESNVSNHNGDMFQEWAQAYNSTTAHNPSTLFPPMQHQHGLVVDPNIEEIEIPVMKKDAQADHEVSDYDIRMPQLSSQ</sequence>
<proteinExistence type="evidence at protein level"/>